<keyword id="KW-0235">DNA replication</keyword>
<keyword id="KW-0614">Plasmid</keyword>
<accession>Q52312</accession>
<accession>P71175</accession>
<accession>Q52283</accession>
<comment type="function">
    <text evidence="1">This is one of the proteins encoded by the trfB operon; it is involved in plasmid maintenance and replication.</text>
</comment>
<comment type="similarity">
    <text evidence="3">Belongs to the ParA family.</text>
</comment>
<name>INCC1_ECOLX</name>
<reference key="1">
    <citation type="submission" date="1996-08" db="EMBL/GenBank/DDBJ databases">
        <title>Evolution of the partitioning and global regulation functions of the IncP central control region.</title>
        <authorList>
            <person name="Macartney D.P."/>
            <person name="Williams D.R."/>
            <person name="Stafford T."/>
            <person name="Foster A."/>
            <person name="Thomas C.M."/>
        </authorList>
    </citation>
    <scope>NUCLEOTIDE SEQUENCE [GENOMIC DNA]</scope>
</reference>
<reference key="2">
    <citation type="journal article" date="1995" name="Microbiology">
        <title>Evolution of the korA-oriV segment of promiscuous IncP plasmids.</title>
        <authorList>
            <person name="Thomas C.M."/>
            <person name="Smith C.A."/>
            <person name="Ibbotson J.P."/>
            <person name="Johnston L."/>
            <person name="Wang N."/>
        </authorList>
    </citation>
    <scope>NUCLEOTIDE SEQUENCE [GENOMIC DNA] OF 1-109</scope>
</reference>
<sequence>MGAIHEETANRSPIPDGHQGAGDRAADHRHSARRAGRWPAPGGVCHFAGADQGGGVAGGQSRMGSSRGTAPRGLRASDGGTAGASSVHRQEVGSRRQEETGTQVMKTLVTAIQKGGQGKTFATCHLAFDFLERGLRVAVIDLDTQGNASFTLSAYQSGYLASQLFTGDTDDLRYWFGKREGESLALIAADANLANLDKMELSQAAAALRASVAALGEFFDVCLIDTAPSLGVAMTAAVLTADYMLSPIEMEAYSLQGMKKMVAVISNLRKQNPKLRFLGMVPNKVDARKPRHVNNLATLQQAYPQLILPFSIGARDSIAEALGEQMPVWKIKKTAARKATQEVRALADYVFTKMEIAQ</sequence>
<gene>
    <name type="primary">incC</name>
</gene>
<proteinExistence type="inferred from homology"/>
<organism>
    <name type="scientific">Escherichia coli</name>
    <dbReference type="NCBI Taxonomy" id="562"/>
    <lineage>
        <taxon>Bacteria</taxon>
        <taxon>Pseudomonadati</taxon>
        <taxon>Pseudomonadota</taxon>
        <taxon>Gammaproteobacteria</taxon>
        <taxon>Enterobacterales</taxon>
        <taxon>Enterobacteriaceae</taxon>
        <taxon>Escherichia</taxon>
    </lineage>
</organism>
<feature type="chain" id="PRO_0000068361" description="Protein IncC">
    <location>
        <begin position="1"/>
        <end position="358"/>
    </location>
</feature>
<feature type="region of interest" description="Disordered" evidence="2">
    <location>
        <begin position="1"/>
        <end position="101"/>
    </location>
</feature>
<feature type="compositionally biased region" description="Basic and acidic residues" evidence="2">
    <location>
        <begin position="88"/>
        <end position="99"/>
    </location>
</feature>
<geneLocation type="plasmid">
    <name>IncP-beta R751</name>
</geneLocation>
<evidence type="ECO:0000250" key="1"/>
<evidence type="ECO:0000256" key="2">
    <source>
        <dbReference type="SAM" id="MobiDB-lite"/>
    </source>
</evidence>
<evidence type="ECO:0000305" key="3"/>
<dbReference type="EMBL" id="U67194">
    <property type="protein sequence ID" value="AAC64421.1"/>
    <property type="molecule type" value="Genomic_DNA"/>
</dbReference>
<dbReference type="SMR" id="Q52312"/>
<dbReference type="GO" id="GO:0006260">
    <property type="term" value="P:DNA replication"/>
    <property type="evidence" value="ECO:0007669"/>
    <property type="project" value="UniProtKB-KW"/>
</dbReference>
<dbReference type="CDD" id="cd02042">
    <property type="entry name" value="ParAB_family"/>
    <property type="match status" value="1"/>
</dbReference>
<dbReference type="Gene3D" id="3.40.50.300">
    <property type="entry name" value="P-loop containing nucleotide triphosphate hydrolases"/>
    <property type="match status" value="1"/>
</dbReference>
<dbReference type="InterPro" id="IPR025669">
    <property type="entry name" value="AAA_dom"/>
</dbReference>
<dbReference type="InterPro" id="IPR050678">
    <property type="entry name" value="DNA_Partitioning_ATPase"/>
</dbReference>
<dbReference type="InterPro" id="IPR027417">
    <property type="entry name" value="P-loop_NTPase"/>
</dbReference>
<dbReference type="PANTHER" id="PTHR13696:SF99">
    <property type="entry name" value="COBYRINIC ACID AC-DIAMIDE SYNTHASE"/>
    <property type="match status" value="1"/>
</dbReference>
<dbReference type="PANTHER" id="PTHR13696">
    <property type="entry name" value="P-LOOP CONTAINING NUCLEOSIDE TRIPHOSPHATE HYDROLASE"/>
    <property type="match status" value="1"/>
</dbReference>
<dbReference type="Pfam" id="PF13614">
    <property type="entry name" value="AAA_31"/>
    <property type="match status" value="1"/>
</dbReference>
<dbReference type="SUPFAM" id="SSF52540">
    <property type="entry name" value="P-loop containing nucleoside triphosphate hydrolases"/>
    <property type="match status" value="1"/>
</dbReference>
<protein>
    <recommendedName>
        <fullName>Protein IncC</fullName>
    </recommendedName>
</protein>